<keyword id="KW-0963">Cytoplasm</keyword>
<keyword id="KW-0238">DNA-binding</keyword>
<keyword id="KW-0479">Metal-binding</keyword>
<keyword id="KW-0539">Nucleus</keyword>
<keyword id="KW-0597">Phosphoprotein</keyword>
<keyword id="KW-1185">Reference proteome</keyword>
<keyword id="KW-0804">Transcription</keyword>
<keyword id="KW-0805">Transcription regulation</keyword>
<keyword id="KW-0862">Zinc</keyword>
<protein>
    <recommendedName>
        <fullName>Mothers against decapentaplegic homolog 9</fullName>
        <shortName>MAD homolog 9</shortName>
        <shortName>Mothers against DPP homolog 9</shortName>
    </recommendedName>
    <alternativeName>
        <fullName>SMAD family member 9</fullName>
        <shortName>SMAD 9</shortName>
        <shortName>Smad9</shortName>
    </alternativeName>
    <alternativeName>
        <fullName>Smad8</fullName>
    </alternativeName>
</protein>
<organism>
    <name type="scientific">Mus musculus</name>
    <name type="common">Mouse</name>
    <dbReference type="NCBI Taxonomy" id="10090"/>
    <lineage>
        <taxon>Eukaryota</taxon>
        <taxon>Metazoa</taxon>
        <taxon>Chordata</taxon>
        <taxon>Craniata</taxon>
        <taxon>Vertebrata</taxon>
        <taxon>Euteleostomi</taxon>
        <taxon>Mammalia</taxon>
        <taxon>Eutheria</taxon>
        <taxon>Euarchontoglires</taxon>
        <taxon>Glires</taxon>
        <taxon>Rodentia</taxon>
        <taxon>Myomorpha</taxon>
        <taxon>Muroidea</taxon>
        <taxon>Muridae</taxon>
        <taxon>Murinae</taxon>
        <taxon>Mus</taxon>
        <taxon>Mus</taxon>
    </lineage>
</organism>
<feature type="chain" id="PRO_0000090876" description="Mothers against decapentaplegic homolog 9">
    <location>
        <begin position="1"/>
        <end position="430"/>
    </location>
</feature>
<feature type="domain" description="MH1" evidence="3">
    <location>
        <begin position="16"/>
        <end position="140"/>
    </location>
</feature>
<feature type="domain" description="MH2" evidence="4">
    <location>
        <begin position="236"/>
        <end position="430"/>
    </location>
</feature>
<feature type="region of interest" description="Disordered" evidence="5">
    <location>
        <begin position="186"/>
        <end position="222"/>
    </location>
</feature>
<feature type="compositionally biased region" description="Polar residues" evidence="5">
    <location>
        <begin position="202"/>
        <end position="221"/>
    </location>
</feature>
<feature type="binding site" evidence="1">
    <location>
        <position position="68"/>
    </location>
    <ligand>
        <name>Zn(2+)</name>
        <dbReference type="ChEBI" id="CHEBI:29105"/>
    </ligand>
</feature>
<feature type="binding site" evidence="1">
    <location>
        <position position="113"/>
    </location>
    <ligand>
        <name>Zn(2+)</name>
        <dbReference type="ChEBI" id="CHEBI:29105"/>
    </ligand>
</feature>
<feature type="binding site" evidence="1">
    <location>
        <position position="125"/>
    </location>
    <ligand>
        <name>Zn(2+)</name>
        <dbReference type="ChEBI" id="CHEBI:29105"/>
    </ligand>
</feature>
<feature type="binding site" evidence="1">
    <location>
        <position position="130"/>
    </location>
    <ligand>
        <name>Zn(2+)</name>
        <dbReference type="ChEBI" id="CHEBI:29105"/>
    </ligand>
</feature>
<feature type="sequence variant" evidence="6">
    <location>
        <begin position="214"/>
        <end position="215"/>
    </location>
</feature>
<proteinExistence type="evidence at protein level"/>
<gene>
    <name type="primary">Smad9</name>
    <name type="synonym">Madh8</name>
    <name type="synonym">Madh9</name>
    <name type="synonym">Smad8</name>
</gene>
<comment type="function">
    <text>Transcriptional modulator activated by BMP (bone morphogenetic proteins) type 1 receptor kinase. SMAD9 is a receptor-regulated SMAD (R-SMAD). Has been shown to be activated by activin type I receptor-like kinases (ALK-2, ALK-3, ALK-6) which stimulate heteromerization between SMAD9 and SMAD4. May play a role in osteoblast differentiation and maturation.</text>
</comment>
<comment type="subunit">
    <text evidence="1 2">Interaction with the co-SMAD SMAD4. Interacts with PEBP2-alpha subunit (By similarity). Interacts with RANBP3L (By similarity).</text>
</comment>
<comment type="subcellular location">
    <subcellularLocation>
        <location>Cytoplasm</location>
    </subcellularLocation>
    <subcellularLocation>
        <location>Nucleus</location>
    </subcellularLocation>
    <text>Cytoplasmic in the absence of ligand. Migrates to the nucleus when complexed with SMAD4.</text>
</comment>
<comment type="PTM">
    <text>Phosphorylated on serine by BMP (bone morphogenetic proteins) type 1 receptor kinase and activin type I receptor-like kinases (ALK-2, ALK-3 and ALK-6).</text>
</comment>
<comment type="similarity">
    <text evidence="7">Belongs to the dwarfin/SMAD family.</text>
</comment>
<dbReference type="EMBL" id="AF175408">
    <property type="protein sequence ID" value="AAF77079.2"/>
    <property type="molecule type" value="mRNA"/>
</dbReference>
<dbReference type="EMBL" id="AY145520">
    <property type="protein sequence ID" value="AAN85445.1"/>
    <property type="molecule type" value="mRNA"/>
</dbReference>
<dbReference type="CCDS" id="CCDS17354.1"/>
<dbReference type="RefSeq" id="NP_062356.3">
    <property type="nucleotide sequence ID" value="NM_019483.5"/>
</dbReference>
<dbReference type="RefSeq" id="XP_006501791.1">
    <property type="nucleotide sequence ID" value="XM_006501728.4"/>
</dbReference>
<dbReference type="SMR" id="Q9JIW5"/>
<dbReference type="BioGRID" id="207765">
    <property type="interactions" value="9"/>
</dbReference>
<dbReference type="FunCoup" id="Q9JIW5">
    <property type="interactions" value="2392"/>
</dbReference>
<dbReference type="IntAct" id="Q9JIW5">
    <property type="interactions" value="1"/>
</dbReference>
<dbReference type="MINT" id="Q9JIW5"/>
<dbReference type="STRING" id="10090.ENSMUSP00000029371"/>
<dbReference type="ChEMBL" id="CHEMBL3883282"/>
<dbReference type="iPTMnet" id="Q9JIW5"/>
<dbReference type="PhosphoSitePlus" id="Q9JIW5"/>
<dbReference type="PaxDb" id="10090-ENSMUSP00000029371"/>
<dbReference type="ProteomicsDB" id="261377"/>
<dbReference type="DNASU" id="55994"/>
<dbReference type="Ensembl" id="ENSMUST00000029371.3">
    <property type="protein sequence ID" value="ENSMUSP00000029371.3"/>
    <property type="gene ID" value="ENSMUSG00000027796.3"/>
</dbReference>
<dbReference type="GeneID" id="55994"/>
<dbReference type="KEGG" id="mmu:55994"/>
<dbReference type="UCSC" id="uc008pfv.2">
    <property type="organism name" value="mouse"/>
</dbReference>
<dbReference type="AGR" id="MGI:1859993"/>
<dbReference type="CTD" id="4093"/>
<dbReference type="MGI" id="MGI:1859993">
    <property type="gene designation" value="Smad9"/>
</dbReference>
<dbReference type="VEuPathDB" id="HostDB:ENSMUSG00000027796"/>
<dbReference type="eggNOG" id="KOG3701">
    <property type="taxonomic scope" value="Eukaryota"/>
</dbReference>
<dbReference type="GeneTree" id="ENSGT00940000154391"/>
<dbReference type="HOGENOM" id="CLU_026736_0_2_1"/>
<dbReference type="InParanoid" id="Q9JIW5"/>
<dbReference type="OMA" id="YHATETP"/>
<dbReference type="OrthoDB" id="5794312at2759"/>
<dbReference type="PhylomeDB" id="Q9JIW5"/>
<dbReference type="TreeFam" id="TF314923"/>
<dbReference type="Reactome" id="R-MMU-201451">
    <property type="pathway name" value="Signaling by BMP"/>
</dbReference>
<dbReference type="BioGRID-ORCS" id="55994">
    <property type="hits" value="2 hits in 78 CRISPR screens"/>
</dbReference>
<dbReference type="PRO" id="PR:Q9JIW5"/>
<dbReference type="Proteomes" id="UP000000589">
    <property type="component" value="Chromosome 3"/>
</dbReference>
<dbReference type="RNAct" id="Q9JIW5">
    <property type="molecule type" value="protein"/>
</dbReference>
<dbReference type="Bgee" id="ENSMUSG00000027796">
    <property type="expression patterns" value="Expressed in female urethra and 72 other cell types or tissues"/>
</dbReference>
<dbReference type="ExpressionAtlas" id="Q9JIW5">
    <property type="expression patterns" value="baseline and differential"/>
</dbReference>
<dbReference type="GO" id="GO:0005737">
    <property type="term" value="C:cytoplasm"/>
    <property type="evidence" value="ECO:0000314"/>
    <property type="project" value="BHF-UCL"/>
</dbReference>
<dbReference type="GO" id="GO:0005634">
    <property type="term" value="C:nucleus"/>
    <property type="evidence" value="ECO:0000314"/>
    <property type="project" value="BHF-UCL"/>
</dbReference>
<dbReference type="GO" id="GO:0005667">
    <property type="term" value="C:transcription regulator complex"/>
    <property type="evidence" value="ECO:0007669"/>
    <property type="project" value="InterPro"/>
</dbReference>
<dbReference type="GO" id="GO:0003677">
    <property type="term" value="F:DNA binding"/>
    <property type="evidence" value="ECO:0007669"/>
    <property type="project" value="UniProtKB-KW"/>
</dbReference>
<dbReference type="GO" id="GO:0046872">
    <property type="term" value="F:metal ion binding"/>
    <property type="evidence" value="ECO:0007669"/>
    <property type="project" value="UniProtKB-KW"/>
</dbReference>
<dbReference type="GO" id="GO:0030509">
    <property type="term" value="P:BMP signaling pathway"/>
    <property type="evidence" value="ECO:0000314"/>
    <property type="project" value="MGI"/>
</dbReference>
<dbReference type="GO" id="GO:0060348">
    <property type="term" value="P:bone development"/>
    <property type="evidence" value="ECO:0000316"/>
    <property type="project" value="MGI"/>
</dbReference>
<dbReference type="GO" id="GO:0051216">
    <property type="term" value="P:cartilage development"/>
    <property type="evidence" value="ECO:0000316"/>
    <property type="project" value="MGI"/>
</dbReference>
<dbReference type="GO" id="GO:0030902">
    <property type="term" value="P:hindbrain development"/>
    <property type="evidence" value="ECO:0000315"/>
    <property type="project" value="MGI"/>
</dbReference>
<dbReference type="GO" id="GO:0030901">
    <property type="term" value="P:midbrain development"/>
    <property type="evidence" value="ECO:0000315"/>
    <property type="project" value="MGI"/>
</dbReference>
<dbReference type="GO" id="GO:0006355">
    <property type="term" value="P:regulation of DNA-templated transcription"/>
    <property type="evidence" value="ECO:0007669"/>
    <property type="project" value="InterPro"/>
</dbReference>
<dbReference type="GO" id="GO:0060395">
    <property type="term" value="P:SMAD protein signal transduction"/>
    <property type="evidence" value="ECO:0000316"/>
    <property type="project" value="BHF-UCL"/>
</dbReference>
<dbReference type="GO" id="GO:0048863">
    <property type="term" value="P:stem cell differentiation"/>
    <property type="evidence" value="ECO:0000314"/>
    <property type="project" value="UniProtKB"/>
</dbReference>
<dbReference type="GO" id="GO:0001657">
    <property type="term" value="P:ureteric bud development"/>
    <property type="evidence" value="ECO:0000270"/>
    <property type="project" value="UniProtKB"/>
</dbReference>
<dbReference type="CDD" id="cd10490">
    <property type="entry name" value="MH1_SMAD_1_5_9"/>
    <property type="match status" value="1"/>
</dbReference>
<dbReference type="FunFam" id="2.60.200.10:FF:000001">
    <property type="entry name" value="Mothers against decapentaplegic homolog"/>
    <property type="match status" value="1"/>
</dbReference>
<dbReference type="FunFam" id="3.90.520.10:FF:000001">
    <property type="entry name" value="Mothers against decapentaplegic homolog"/>
    <property type="match status" value="1"/>
</dbReference>
<dbReference type="Gene3D" id="2.60.200.10">
    <property type="match status" value="1"/>
</dbReference>
<dbReference type="Gene3D" id="3.90.520.10">
    <property type="entry name" value="SMAD MH1 domain"/>
    <property type="match status" value="1"/>
</dbReference>
<dbReference type="InterPro" id="IPR013790">
    <property type="entry name" value="Dwarfin"/>
</dbReference>
<dbReference type="InterPro" id="IPR003619">
    <property type="entry name" value="MAD_homology1_Dwarfin-type"/>
</dbReference>
<dbReference type="InterPro" id="IPR013019">
    <property type="entry name" value="MAD_homology_MH1"/>
</dbReference>
<dbReference type="InterPro" id="IPR017855">
    <property type="entry name" value="SMAD-like_dom_sf"/>
</dbReference>
<dbReference type="InterPro" id="IPR001132">
    <property type="entry name" value="SMAD_dom_Dwarfin-type"/>
</dbReference>
<dbReference type="InterPro" id="IPR008984">
    <property type="entry name" value="SMAD_FHA_dom_sf"/>
</dbReference>
<dbReference type="InterPro" id="IPR036578">
    <property type="entry name" value="SMAD_MH1_sf"/>
</dbReference>
<dbReference type="PANTHER" id="PTHR13703:SF41">
    <property type="entry name" value="MOTHERS AGAINST DECAPENTAPLEGIC HOMOLOG 9"/>
    <property type="match status" value="1"/>
</dbReference>
<dbReference type="PANTHER" id="PTHR13703">
    <property type="entry name" value="SMAD"/>
    <property type="match status" value="1"/>
</dbReference>
<dbReference type="Pfam" id="PF03165">
    <property type="entry name" value="MH1"/>
    <property type="match status" value="1"/>
</dbReference>
<dbReference type="Pfam" id="PF03166">
    <property type="entry name" value="MH2"/>
    <property type="match status" value="1"/>
</dbReference>
<dbReference type="SMART" id="SM00523">
    <property type="entry name" value="DWA"/>
    <property type="match status" value="1"/>
</dbReference>
<dbReference type="SMART" id="SM00524">
    <property type="entry name" value="DWB"/>
    <property type="match status" value="1"/>
</dbReference>
<dbReference type="SUPFAM" id="SSF56366">
    <property type="entry name" value="SMAD MH1 domain"/>
    <property type="match status" value="1"/>
</dbReference>
<dbReference type="SUPFAM" id="SSF49879">
    <property type="entry name" value="SMAD/FHA domain"/>
    <property type="match status" value="1"/>
</dbReference>
<dbReference type="PROSITE" id="PS51075">
    <property type="entry name" value="MH1"/>
    <property type="match status" value="1"/>
</dbReference>
<dbReference type="PROSITE" id="PS51076">
    <property type="entry name" value="MH2"/>
    <property type="match status" value="1"/>
</dbReference>
<sequence>MHPSTPISSLFSFTSPAVKRLLGWKQGDEEEKWAEKAVDSLVKKLKKKKGAMDELERALSCPGQPSKCVTIPRSLDGRLQVSHRKGLPHVIYCRVWRWPDLQSHHELKPLECCEFPFGSKQKEVCINPYHYRRVETPVLPPVLVPRHSEYNPQLSLLAKFRSASLHSEPLMPHNATYPDSFQQSLCPAPPSSPGHVFPQSPCPTSYPHSPGSPSESDSPYQHSDFRPVCYEEPQHWCSVAYYELNNRVGETFQASSRSVLIDGFTDPSNNRNRFCLGLLSNVNRNSTIENTRRHIGKGVHLYYVGGEVYAECVSDSSIFVQSRNCNYQHGFHPATVCKIPSGCSLKVFNNQLFAQLLAQSVHHGFEVVYELTKMCTIRMSFVKGWGAEYHRQDVTSTPCWIEIHLHGPLQWLDKVLTQMGSPHNPISSVS</sequence>
<evidence type="ECO:0000250" key="1"/>
<evidence type="ECO:0000250" key="2">
    <source>
        <dbReference type="UniProtKB" id="O15198"/>
    </source>
</evidence>
<evidence type="ECO:0000255" key="3">
    <source>
        <dbReference type="PROSITE-ProRule" id="PRU00438"/>
    </source>
</evidence>
<evidence type="ECO:0000255" key="4">
    <source>
        <dbReference type="PROSITE-ProRule" id="PRU00439"/>
    </source>
</evidence>
<evidence type="ECO:0000256" key="5">
    <source>
        <dbReference type="SAM" id="MobiDB-lite"/>
    </source>
</evidence>
<evidence type="ECO:0000269" key="6">
    <source>
    </source>
</evidence>
<evidence type="ECO:0000305" key="7"/>
<reference key="1">
    <citation type="journal article" date="2000" name="Biochem. Biophys. Res. Commun.">
        <title>Mouse Smad8 phosphorylation downstream of BMP receptors ALK-2, ALK-3, and ALK-6 induces its association with Smad4 and transcriptional activity.</title>
        <authorList>
            <person name="Kawai S."/>
            <person name="Faucheu C."/>
            <person name="Gallea S."/>
            <person name="Spinella-Jaegle S."/>
            <person name="Atfi A."/>
            <person name="Baron R."/>
            <person name="Roman-Roman S."/>
        </authorList>
    </citation>
    <scope>NUCLEOTIDE SEQUENCE [MRNA]</scope>
    <scope>CHARACTERIZATION</scope>
    <scope>VARIANT 214-SER-GLU-215 DEL</scope>
    <source>
        <tissue>Embryo</tissue>
    </source>
</reference>
<reference key="2">
    <citation type="submission" date="2002-08" db="EMBL/GenBank/DDBJ databases">
        <authorList>
            <person name="Kawai S."/>
            <person name="Roman-Roman S."/>
        </authorList>
    </citation>
    <scope>SEQUENCE REVISION TO 115 AND 135</scope>
</reference>
<reference key="3">
    <citation type="submission" date="2002-08" db="EMBL/GenBank/DDBJ databases">
        <title>Mouse Smad8 protein mRNA alternative form (6-bp insert in linker region).</title>
        <authorList>
            <person name="Kawai S."/>
            <person name="Roman-Roman S."/>
        </authorList>
    </citation>
    <scope>NUCLEOTIDE SEQUENCE [MRNA]</scope>
    <source>
        <strain>C57BL/6J</strain>
        <tissue>Embryo</tissue>
    </source>
</reference>
<accession>Q9JIW5</accession>
<accession>Q8CFF9</accession>
<name>SMAD9_MOUSE</name>